<reference key="1">
    <citation type="journal article" date="2003" name="Nat. Biotechnol.">
        <title>The genome sequence of the entomopathogenic bacterium Photorhabdus luminescens.</title>
        <authorList>
            <person name="Duchaud E."/>
            <person name="Rusniok C."/>
            <person name="Frangeul L."/>
            <person name="Buchrieser C."/>
            <person name="Givaudan A."/>
            <person name="Taourit S."/>
            <person name="Bocs S."/>
            <person name="Boursaux-Eude C."/>
            <person name="Chandler M."/>
            <person name="Charles J.-F."/>
            <person name="Dassa E."/>
            <person name="Derose R."/>
            <person name="Derzelle S."/>
            <person name="Freyssinet G."/>
            <person name="Gaudriault S."/>
            <person name="Medigue C."/>
            <person name="Lanois A."/>
            <person name="Powell K."/>
            <person name="Siguier P."/>
            <person name="Vincent R."/>
            <person name="Wingate V."/>
            <person name="Zouine M."/>
            <person name="Glaser P."/>
            <person name="Boemare N."/>
            <person name="Danchin A."/>
            <person name="Kunst F."/>
        </authorList>
    </citation>
    <scope>NUCLEOTIDE SEQUENCE [LARGE SCALE GENOMIC DNA]</scope>
    <source>
        <strain>DSM 15139 / CIP 105565 / TT01</strain>
    </source>
</reference>
<sequence length="351" mass="40166">MRKIIHIDMDCFYAAIEMRDDPSLRHIPIAVGGNADRRGVISTANYPARRFGVRSAMSTAMALKLCPQLKVLPGRMALYREVSRHIHQILSRYTEWIEPLSLDEAYLNVTDSHHCYGSATLIAQEIRQSIFDELQLTASAGIAPVKFLAKIASDINKPNGQYVIPPDRVADFIKVLPLRKIPGVGKVMVQRLANMGLETCSDVQKYDVIVLVKQLGKFGQVLWDRCHGIDERLVNPDRLRKSIGVERTLARDIHQWEQCTELIESLYLELEKRLSNVKPDLRIARQGIKLKFDDFQLTTQEHVHPLLDKQDLLQLAQKTWTSRREGRGVRLVGLHVTLQDPEIERQLLLEW</sequence>
<accession>Q7N7B6</accession>
<proteinExistence type="inferred from homology"/>
<dbReference type="EC" id="2.7.7.7" evidence="1"/>
<dbReference type="EMBL" id="BX571863">
    <property type="protein sequence ID" value="CAE13533.1"/>
    <property type="molecule type" value="Genomic_DNA"/>
</dbReference>
<dbReference type="RefSeq" id="WP_011145564.1">
    <property type="nucleotide sequence ID" value="NC_005126.1"/>
</dbReference>
<dbReference type="SMR" id="Q7N7B6"/>
<dbReference type="STRING" id="243265.plu1239"/>
<dbReference type="GeneID" id="48847509"/>
<dbReference type="KEGG" id="plu:plu1239"/>
<dbReference type="eggNOG" id="COG0389">
    <property type="taxonomic scope" value="Bacteria"/>
</dbReference>
<dbReference type="HOGENOM" id="CLU_012348_1_2_6"/>
<dbReference type="OrthoDB" id="9808813at2"/>
<dbReference type="Proteomes" id="UP000002514">
    <property type="component" value="Chromosome"/>
</dbReference>
<dbReference type="GO" id="GO:0005829">
    <property type="term" value="C:cytosol"/>
    <property type="evidence" value="ECO:0007669"/>
    <property type="project" value="TreeGrafter"/>
</dbReference>
<dbReference type="GO" id="GO:0003684">
    <property type="term" value="F:damaged DNA binding"/>
    <property type="evidence" value="ECO:0007669"/>
    <property type="project" value="InterPro"/>
</dbReference>
<dbReference type="GO" id="GO:0003887">
    <property type="term" value="F:DNA-directed DNA polymerase activity"/>
    <property type="evidence" value="ECO:0007669"/>
    <property type="project" value="UniProtKB-UniRule"/>
</dbReference>
<dbReference type="GO" id="GO:0000287">
    <property type="term" value="F:magnesium ion binding"/>
    <property type="evidence" value="ECO:0007669"/>
    <property type="project" value="UniProtKB-UniRule"/>
</dbReference>
<dbReference type="GO" id="GO:0006261">
    <property type="term" value="P:DNA-templated DNA replication"/>
    <property type="evidence" value="ECO:0007669"/>
    <property type="project" value="UniProtKB-UniRule"/>
</dbReference>
<dbReference type="GO" id="GO:0042276">
    <property type="term" value="P:error-prone translesion synthesis"/>
    <property type="evidence" value="ECO:0007669"/>
    <property type="project" value="TreeGrafter"/>
</dbReference>
<dbReference type="GO" id="GO:0009432">
    <property type="term" value="P:SOS response"/>
    <property type="evidence" value="ECO:0007669"/>
    <property type="project" value="TreeGrafter"/>
</dbReference>
<dbReference type="CDD" id="cd03586">
    <property type="entry name" value="PolY_Pol_IV_kappa"/>
    <property type="match status" value="1"/>
</dbReference>
<dbReference type="FunFam" id="1.10.150.20:FF:000019">
    <property type="entry name" value="DNA polymerase IV"/>
    <property type="match status" value="1"/>
</dbReference>
<dbReference type="FunFam" id="3.30.1490.100:FF:000002">
    <property type="entry name" value="DNA polymerase IV"/>
    <property type="match status" value="1"/>
</dbReference>
<dbReference type="FunFam" id="3.30.70.270:FF:000002">
    <property type="entry name" value="DNA polymerase IV"/>
    <property type="match status" value="1"/>
</dbReference>
<dbReference type="FunFam" id="3.40.1170.60:FF:000001">
    <property type="entry name" value="DNA polymerase IV"/>
    <property type="match status" value="1"/>
</dbReference>
<dbReference type="Gene3D" id="3.30.70.270">
    <property type="match status" value="1"/>
</dbReference>
<dbReference type="Gene3D" id="3.40.1170.60">
    <property type="match status" value="1"/>
</dbReference>
<dbReference type="Gene3D" id="1.10.150.20">
    <property type="entry name" value="5' to 3' exonuclease, C-terminal subdomain"/>
    <property type="match status" value="1"/>
</dbReference>
<dbReference type="Gene3D" id="3.30.1490.100">
    <property type="entry name" value="DNA polymerase, Y-family, little finger domain"/>
    <property type="match status" value="1"/>
</dbReference>
<dbReference type="HAMAP" id="MF_01113">
    <property type="entry name" value="DNApol_IV"/>
    <property type="match status" value="1"/>
</dbReference>
<dbReference type="InterPro" id="IPR043502">
    <property type="entry name" value="DNA/RNA_pol_sf"/>
</dbReference>
<dbReference type="InterPro" id="IPR036775">
    <property type="entry name" value="DNA_pol_Y-fam_lit_finger_sf"/>
</dbReference>
<dbReference type="InterPro" id="IPR017961">
    <property type="entry name" value="DNA_pol_Y-fam_little_finger"/>
</dbReference>
<dbReference type="InterPro" id="IPR050116">
    <property type="entry name" value="DNA_polymerase-Y"/>
</dbReference>
<dbReference type="InterPro" id="IPR022880">
    <property type="entry name" value="DNApol_IV"/>
</dbReference>
<dbReference type="InterPro" id="IPR053848">
    <property type="entry name" value="IMS_HHH_1"/>
</dbReference>
<dbReference type="InterPro" id="IPR043128">
    <property type="entry name" value="Rev_trsase/Diguanyl_cyclase"/>
</dbReference>
<dbReference type="InterPro" id="IPR001126">
    <property type="entry name" value="UmuC"/>
</dbReference>
<dbReference type="NCBIfam" id="NF002677">
    <property type="entry name" value="PRK02406.1"/>
    <property type="match status" value="1"/>
</dbReference>
<dbReference type="PANTHER" id="PTHR11076:SF33">
    <property type="entry name" value="DNA POLYMERASE KAPPA"/>
    <property type="match status" value="1"/>
</dbReference>
<dbReference type="PANTHER" id="PTHR11076">
    <property type="entry name" value="DNA REPAIR POLYMERASE UMUC / TRANSFERASE FAMILY MEMBER"/>
    <property type="match status" value="1"/>
</dbReference>
<dbReference type="Pfam" id="PF00817">
    <property type="entry name" value="IMS"/>
    <property type="match status" value="1"/>
</dbReference>
<dbReference type="Pfam" id="PF11799">
    <property type="entry name" value="IMS_C"/>
    <property type="match status" value="1"/>
</dbReference>
<dbReference type="Pfam" id="PF21999">
    <property type="entry name" value="IMS_HHH_1"/>
    <property type="match status" value="1"/>
</dbReference>
<dbReference type="SUPFAM" id="SSF56672">
    <property type="entry name" value="DNA/RNA polymerases"/>
    <property type="match status" value="1"/>
</dbReference>
<dbReference type="SUPFAM" id="SSF100879">
    <property type="entry name" value="Lesion bypass DNA polymerase (Y-family), little finger domain"/>
    <property type="match status" value="1"/>
</dbReference>
<dbReference type="PROSITE" id="PS50173">
    <property type="entry name" value="UMUC"/>
    <property type="match status" value="1"/>
</dbReference>
<organism>
    <name type="scientific">Photorhabdus laumondii subsp. laumondii (strain DSM 15139 / CIP 105565 / TT01)</name>
    <name type="common">Photorhabdus luminescens subsp. laumondii</name>
    <dbReference type="NCBI Taxonomy" id="243265"/>
    <lineage>
        <taxon>Bacteria</taxon>
        <taxon>Pseudomonadati</taxon>
        <taxon>Pseudomonadota</taxon>
        <taxon>Gammaproteobacteria</taxon>
        <taxon>Enterobacterales</taxon>
        <taxon>Morganellaceae</taxon>
        <taxon>Photorhabdus</taxon>
    </lineage>
</organism>
<comment type="function">
    <text evidence="1">Poorly processive, error-prone DNA polymerase involved in untargeted mutagenesis. Copies undamaged DNA at stalled replication forks, which arise in vivo from mismatched or misaligned primer ends. These misaligned primers can be extended by PolIV. Exhibits no 3'-5' exonuclease (proofreading) activity. May be involved in translesional synthesis, in conjunction with the beta clamp from PolIII.</text>
</comment>
<comment type="catalytic activity">
    <reaction evidence="1">
        <text>DNA(n) + a 2'-deoxyribonucleoside 5'-triphosphate = DNA(n+1) + diphosphate</text>
        <dbReference type="Rhea" id="RHEA:22508"/>
        <dbReference type="Rhea" id="RHEA-COMP:17339"/>
        <dbReference type="Rhea" id="RHEA-COMP:17340"/>
        <dbReference type="ChEBI" id="CHEBI:33019"/>
        <dbReference type="ChEBI" id="CHEBI:61560"/>
        <dbReference type="ChEBI" id="CHEBI:173112"/>
        <dbReference type="EC" id="2.7.7.7"/>
    </reaction>
</comment>
<comment type="cofactor">
    <cofactor evidence="1">
        <name>Mg(2+)</name>
        <dbReference type="ChEBI" id="CHEBI:18420"/>
    </cofactor>
    <text evidence="1">Binds 2 magnesium ions per subunit.</text>
</comment>
<comment type="subunit">
    <text evidence="1">Monomer.</text>
</comment>
<comment type="subcellular location">
    <subcellularLocation>
        <location evidence="1">Cytoplasm</location>
    </subcellularLocation>
</comment>
<comment type="similarity">
    <text evidence="1">Belongs to the DNA polymerase type-Y family.</text>
</comment>
<name>DPO4_PHOLL</name>
<keyword id="KW-0963">Cytoplasm</keyword>
<keyword id="KW-0227">DNA damage</keyword>
<keyword id="KW-0234">DNA repair</keyword>
<keyword id="KW-0235">DNA replication</keyword>
<keyword id="KW-0238">DNA-binding</keyword>
<keyword id="KW-0239">DNA-directed DNA polymerase</keyword>
<keyword id="KW-0460">Magnesium</keyword>
<keyword id="KW-0479">Metal-binding</keyword>
<keyword id="KW-0515">Mutator protein</keyword>
<keyword id="KW-0548">Nucleotidyltransferase</keyword>
<keyword id="KW-1185">Reference proteome</keyword>
<keyword id="KW-0808">Transferase</keyword>
<protein>
    <recommendedName>
        <fullName evidence="1">DNA polymerase IV</fullName>
        <shortName evidence="1">Pol IV</shortName>
        <ecNumber evidence="1">2.7.7.7</ecNumber>
    </recommendedName>
</protein>
<gene>
    <name evidence="1" type="primary">dinB</name>
    <name type="ordered locus">plu1239</name>
</gene>
<feature type="chain" id="PRO_1000084907" description="DNA polymerase IV">
    <location>
        <begin position="1"/>
        <end position="351"/>
    </location>
</feature>
<feature type="domain" description="UmuC" evidence="1">
    <location>
        <begin position="4"/>
        <end position="185"/>
    </location>
</feature>
<feature type="active site" evidence="1">
    <location>
        <position position="104"/>
    </location>
</feature>
<feature type="binding site" evidence="1">
    <location>
        <position position="8"/>
    </location>
    <ligand>
        <name>Mg(2+)</name>
        <dbReference type="ChEBI" id="CHEBI:18420"/>
    </ligand>
</feature>
<feature type="binding site" evidence="1">
    <location>
        <position position="103"/>
    </location>
    <ligand>
        <name>Mg(2+)</name>
        <dbReference type="ChEBI" id="CHEBI:18420"/>
    </ligand>
</feature>
<feature type="site" description="Substrate discrimination" evidence="1">
    <location>
        <position position="13"/>
    </location>
</feature>
<evidence type="ECO:0000255" key="1">
    <source>
        <dbReference type="HAMAP-Rule" id="MF_01113"/>
    </source>
</evidence>